<name>RBFA_CAUSK</name>
<feature type="chain" id="PRO_1000073753" description="Ribosome-binding factor A">
    <location>
        <begin position="1"/>
        <end position="164"/>
    </location>
</feature>
<sequence length="164" mass="18189">MKRHSENKKSGPVGPSQRQLRAGELIRHALVDILREEDLVDPALAGISVTISEVRMSADLKHAICFVEPLGASIAPQVEREPSSPSRTVVVPGSPAEVVAGLTRLTKFLRGKLAKTIDMKFTPELKFLHDETFNSATYMDRLFEDPRVQQDVRRLSDVAEDEEG</sequence>
<accession>B0T172</accession>
<organism>
    <name type="scientific">Caulobacter sp. (strain K31)</name>
    <dbReference type="NCBI Taxonomy" id="366602"/>
    <lineage>
        <taxon>Bacteria</taxon>
        <taxon>Pseudomonadati</taxon>
        <taxon>Pseudomonadota</taxon>
        <taxon>Alphaproteobacteria</taxon>
        <taxon>Caulobacterales</taxon>
        <taxon>Caulobacteraceae</taxon>
        <taxon>Caulobacter</taxon>
    </lineage>
</organism>
<gene>
    <name evidence="1" type="primary">rbfA</name>
    <name type="ordered locus">Caul_0038</name>
</gene>
<reference key="1">
    <citation type="submission" date="2008-01" db="EMBL/GenBank/DDBJ databases">
        <title>Complete sequence of chromosome of Caulobacter sp. K31.</title>
        <authorList>
            <consortium name="US DOE Joint Genome Institute"/>
            <person name="Copeland A."/>
            <person name="Lucas S."/>
            <person name="Lapidus A."/>
            <person name="Barry K."/>
            <person name="Glavina del Rio T."/>
            <person name="Dalin E."/>
            <person name="Tice H."/>
            <person name="Pitluck S."/>
            <person name="Bruce D."/>
            <person name="Goodwin L."/>
            <person name="Thompson L.S."/>
            <person name="Brettin T."/>
            <person name="Detter J.C."/>
            <person name="Han C."/>
            <person name="Schmutz J."/>
            <person name="Larimer F."/>
            <person name="Land M."/>
            <person name="Hauser L."/>
            <person name="Kyrpides N."/>
            <person name="Kim E."/>
            <person name="Stephens C."/>
            <person name="Richardson P."/>
        </authorList>
    </citation>
    <scope>NUCLEOTIDE SEQUENCE [LARGE SCALE GENOMIC DNA]</scope>
    <source>
        <strain>K31</strain>
    </source>
</reference>
<keyword id="KW-0963">Cytoplasm</keyword>
<keyword id="KW-0690">Ribosome biogenesis</keyword>
<comment type="function">
    <text evidence="1">One of several proteins that assist in the late maturation steps of the functional core of the 30S ribosomal subunit. Associates with free 30S ribosomal subunits (but not with 30S subunits that are part of 70S ribosomes or polysomes). Required for efficient processing of 16S rRNA. May interact with the 5'-terminal helix region of 16S rRNA.</text>
</comment>
<comment type="subunit">
    <text evidence="1">Monomer. Binds 30S ribosomal subunits, but not 50S ribosomal subunits or 70S ribosomes.</text>
</comment>
<comment type="subcellular location">
    <subcellularLocation>
        <location evidence="1">Cytoplasm</location>
    </subcellularLocation>
</comment>
<comment type="similarity">
    <text evidence="1">Belongs to the RbfA family.</text>
</comment>
<evidence type="ECO:0000255" key="1">
    <source>
        <dbReference type="HAMAP-Rule" id="MF_00003"/>
    </source>
</evidence>
<proteinExistence type="inferred from homology"/>
<dbReference type="EMBL" id="CP000927">
    <property type="protein sequence ID" value="ABZ69176.1"/>
    <property type="molecule type" value="Genomic_DNA"/>
</dbReference>
<dbReference type="SMR" id="B0T172"/>
<dbReference type="STRING" id="366602.Caul_0038"/>
<dbReference type="KEGG" id="cak:Caul_0038"/>
<dbReference type="eggNOG" id="COG0858">
    <property type="taxonomic scope" value="Bacteria"/>
</dbReference>
<dbReference type="HOGENOM" id="CLU_089475_1_0_5"/>
<dbReference type="OrthoDB" id="9805051at2"/>
<dbReference type="GO" id="GO:0005829">
    <property type="term" value="C:cytosol"/>
    <property type="evidence" value="ECO:0007669"/>
    <property type="project" value="TreeGrafter"/>
</dbReference>
<dbReference type="GO" id="GO:0043024">
    <property type="term" value="F:ribosomal small subunit binding"/>
    <property type="evidence" value="ECO:0007669"/>
    <property type="project" value="TreeGrafter"/>
</dbReference>
<dbReference type="GO" id="GO:0030490">
    <property type="term" value="P:maturation of SSU-rRNA"/>
    <property type="evidence" value="ECO:0007669"/>
    <property type="project" value="UniProtKB-UniRule"/>
</dbReference>
<dbReference type="Gene3D" id="3.30.300.20">
    <property type="match status" value="1"/>
</dbReference>
<dbReference type="HAMAP" id="MF_00003">
    <property type="entry name" value="RbfA"/>
    <property type="match status" value="1"/>
</dbReference>
<dbReference type="InterPro" id="IPR015946">
    <property type="entry name" value="KH_dom-like_a/b"/>
</dbReference>
<dbReference type="InterPro" id="IPR000238">
    <property type="entry name" value="RbfA"/>
</dbReference>
<dbReference type="InterPro" id="IPR023799">
    <property type="entry name" value="RbfA_dom_sf"/>
</dbReference>
<dbReference type="InterPro" id="IPR020053">
    <property type="entry name" value="Ribosome-bd_factorA_CS"/>
</dbReference>
<dbReference type="NCBIfam" id="NF001802">
    <property type="entry name" value="PRK00521.2-5"/>
    <property type="match status" value="1"/>
</dbReference>
<dbReference type="PANTHER" id="PTHR33515">
    <property type="entry name" value="RIBOSOME-BINDING FACTOR A, CHLOROPLASTIC-RELATED"/>
    <property type="match status" value="1"/>
</dbReference>
<dbReference type="PANTHER" id="PTHR33515:SF1">
    <property type="entry name" value="RIBOSOME-BINDING FACTOR A, CHLOROPLASTIC-RELATED"/>
    <property type="match status" value="1"/>
</dbReference>
<dbReference type="Pfam" id="PF02033">
    <property type="entry name" value="RBFA"/>
    <property type="match status" value="1"/>
</dbReference>
<dbReference type="SUPFAM" id="SSF89919">
    <property type="entry name" value="Ribosome-binding factor A, RbfA"/>
    <property type="match status" value="1"/>
</dbReference>
<dbReference type="PROSITE" id="PS01319">
    <property type="entry name" value="RBFA"/>
    <property type="match status" value="1"/>
</dbReference>
<protein>
    <recommendedName>
        <fullName evidence="1">Ribosome-binding factor A</fullName>
    </recommendedName>
</protein>